<feature type="chain" id="PRO_0000292910" description="3-ketoacyl-CoA thiolase">
    <location>
        <begin position="1"/>
        <end position="387"/>
    </location>
</feature>
<feature type="active site" description="Acyl-thioester intermediate" evidence="1">
    <location>
        <position position="91"/>
    </location>
</feature>
<feature type="active site" description="Proton acceptor" evidence="1">
    <location>
        <position position="343"/>
    </location>
</feature>
<feature type="active site" description="Proton acceptor" evidence="1">
    <location>
        <position position="373"/>
    </location>
</feature>
<proteinExistence type="inferred from homology"/>
<keyword id="KW-0012">Acyltransferase</keyword>
<keyword id="KW-0963">Cytoplasm</keyword>
<keyword id="KW-0276">Fatty acid metabolism</keyword>
<keyword id="KW-0442">Lipid degradation</keyword>
<keyword id="KW-0443">Lipid metabolism</keyword>
<keyword id="KW-0808">Transferase</keyword>
<name>FADA_SHIF8</name>
<evidence type="ECO:0000255" key="1">
    <source>
        <dbReference type="HAMAP-Rule" id="MF_01620"/>
    </source>
</evidence>
<comment type="function">
    <text evidence="1">Catalyzes the final step of fatty acid oxidation in which acetyl-CoA is released and the CoA ester of a fatty acid two carbons shorter is formed.</text>
</comment>
<comment type="catalytic activity">
    <reaction evidence="1">
        <text>an acyl-CoA + acetyl-CoA = a 3-oxoacyl-CoA + CoA</text>
        <dbReference type="Rhea" id="RHEA:21564"/>
        <dbReference type="ChEBI" id="CHEBI:57287"/>
        <dbReference type="ChEBI" id="CHEBI:57288"/>
        <dbReference type="ChEBI" id="CHEBI:58342"/>
        <dbReference type="ChEBI" id="CHEBI:90726"/>
        <dbReference type="EC" id="2.3.1.16"/>
    </reaction>
</comment>
<comment type="pathway">
    <text evidence="1">Lipid metabolism; fatty acid beta-oxidation.</text>
</comment>
<comment type="subunit">
    <text evidence="1">Heterotetramer of two alpha chains (FadB) and two beta chains (FadA).</text>
</comment>
<comment type="subcellular location">
    <subcellularLocation>
        <location evidence="1">Cytoplasm</location>
    </subcellularLocation>
</comment>
<comment type="similarity">
    <text evidence="1">Belongs to the thiolase-like superfamily. Thiolase family.</text>
</comment>
<dbReference type="EC" id="2.3.1.16" evidence="1"/>
<dbReference type="EMBL" id="CP000266">
    <property type="protein sequence ID" value="ABF05680.1"/>
    <property type="molecule type" value="Genomic_DNA"/>
</dbReference>
<dbReference type="RefSeq" id="WP_000438720.1">
    <property type="nucleotide sequence ID" value="NC_008258.1"/>
</dbReference>
<dbReference type="SMR" id="Q0SZ35"/>
<dbReference type="KEGG" id="sfv:SFV_3655"/>
<dbReference type="HOGENOM" id="CLU_031026_2_3_6"/>
<dbReference type="UniPathway" id="UPA00659"/>
<dbReference type="Proteomes" id="UP000000659">
    <property type="component" value="Chromosome"/>
</dbReference>
<dbReference type="GO" id="GO:0005737">
    <property type="term" value="C:cytoplasm"/>
    <property type="evidence" value="ECO:0007669"/>
    <property type="project" value="UniProtKB-SubCell"/>
</dbReference>
<dbReference type="GO" id="GO:0003988">
    <property type="term" value="F:acetyl-CoA C-acyltransferase activity"/>
    <property type="evidence" value="ECO:0007669"/>
    <property type="project" value="UniProtKB-UniRule"/>
</dbReference>
<dbReference type="GO" id="GO:0006635">
    <property type="term" value="P:fatty acid beta-oxidation"/>
    <property type="evidence" value="ECO:0007669"/>
    <property type="project" value="UniProtKB-UniRule"/>
</dbReference>
<dbReference type="GO" id="GO:0010124">
    <property type="term" value="P:phenylacetate catabolic process"/>
    <property type="evidence" value="ECO:0007669"/>
    <property type="project" value="TreeGrafter"/>
</dbReference>
<dbReference type="CDD" id="cd00751">
    <property type="entry name" value="thiolase"/>
    <property type="match status" value="1"/>
</dbReference>
<dbReference type="FunFam" id="3.40.47.10:FF:000010">
    <property type="entry name" value="Acetyl-CoA acetyltransferase (Thiolase)"/>
    <property type="match status" value="1"/>
</dbReference>
<dbReference type="Gene3D" id="3.40.47.10">
    <property type="match status" value="2"/>
</dbReference>
<dbReference type="HAMAP" id="MF_01620">
    <property type="entry name" value="FadA"/>
    <property type="match status" value="1"/>
</dbReference>
<dbReference type="InterPro" id="IPR012805">
    <property type="entry name" value="FadA"/>
</dbReference>
<dbReference type="InterPro" id="IPR002155">
    <property type="entry name" value="Thiolase"/>
</dbReference>
<dbReference type="InterPro" id="IPR016039">
    <property type="entry name" value="Thiolase-like"/>
</dbReference>
<dbReference type="InterPro" id="IPR050215">
    <property type="entry name" value="Thiolase-like_sf_Thiolase"/>
</dbReference>
<dbReference type="InterPro" id="IPR020615">
    <property type="entry name" value="Thiolase_acyl_enz_int_AS"/>
</dbReference>
<dbReference type="InterPro" id="IPR020610">
    <property type="entry name" value="Thiolase_AS"/>
</dbReference>
<dbReference type="InterPro" id="IPR020617">
    <property type="entry name" value="Thiolase_C"/>
</dbReference>
<dbReference type="InterPro" id="IPR020613">
    <property type="entry name" value="Thiolase_CS"/>
</dbReference>
<dbReference type="InterPro" id="IPR020616">
    <property type="entry name" value="Thiolase_N"/>
</dbReference>
<dbReference type="NCBIfam" id="TIGR01930">
    <property type="entry name" value="AcCoA-C-Actrans"/>
    <property type="match status" value="1"/>
</dbReference>
<dbReference type="NCBIfam" id="TIGR02445">
    <property type="entry name" value="fadA"/>
    <property type="match status" value="1"/>
</dbReference>
<dbReference type="NCBIfam" id="NF006510">
    <property type="entry name" value="PRK08947.1"/>
    <property type="match status" value="1"/>
</dbReference>
<dbReference type="PANTHER" id="PTHR43853:SF11">
    <property type="entry name" value="3-KETOACYL-COA THIOLASE FADA"/>
    <property type="match status" value="1"/>
</dbReference>
<dbReference type="PANTHER" id="PTHR43853">
    <property type="entry name" value="3-KETOACYL-COA THIOLASE, PEROXISOMAL"/>
    <property type="match status" value="1"/>
</dbReference>
<dbReference type="Pfam" id="PF02803">
    <property type="entry name" value="Thiolase_C"/>
    <property type="match status" value="1"/>
</dbReference>
<dbReference type="Pfam" id="PF00108">
    <property type="entry name" value="Thiolase_N"/>
    <property type="match status" value="1"/>
</dbReference>
<dbReference type="PIRSF" id="PIRSF000429">
    <property type="entry name" value="Ac-CoA_Ac_transf"/>
    <property type="match status" value="1"/>
</dbReference>
<dbReference type="SUPFAM" id="SSF53901">
    <property type="entry name" value="Thiolase-like"/>
    <property type="match status" value="2"/>
</dbReference>
<dbReference type="PROSITE" id="PS00098">
    <property type="entry name" value="THIOLASE_1"/>
    <property type="match status" value="1"/>
</dbReference>
<dbReference type="PROSITE" id="PS00737">
    <property type="entry name" value="THIOLASE_2"/>
    <property type="match status" value="1"/>
</dbReference>
<dbReference type="PROSITE" id="PS00099">
    <property type="entry name" value="THIOLASE_3"/>
    <property type="match status" value="1"/>
</dbReference>
<reference key="1">
    <citation type="journal article" date="2006" name="BMC Genomics">
        <title>Complete genome sequence of Shigella flexneri 5b and comparison with Shigella flexneri 2a.</title>
        <authorList>
            <person name="Nie H."/>
            <person name="Yang F."/>
            <person name="Zhang X."/>
            <person name="Yang J."/>
            <person name="Chen L."/>
            <person name="Wang J."/>
            <person name="Xiong Z."/>
            <person name="Peng J."/>
            <person name="Sun L."/>
            <person name="Dong J."/>
            <person name="Xue Y."/>
            <person name="Xu X."/>
            <person name="Chen S."/>
            <person name="Yao Z."/>
            <person name="Shen Y."/>
            <person name="Jin Q."/>
        </authorList>
    </citation>
    <scope>NUCLEOTIDE SEQUENCE [LARGE SCALE GENOMIC DNA]</scope>
    <source>
        <strain>8401</strain>
    </source>
</reference>
<gene>
    <name evidence="1" type="primary">fadA</name>
    <name type="ordered locus">SFV_3655</name>
</gene>
<organism>
    <name type="scientific">Shigella flexneri serotype 5b (strain 8401)</name>
    <dbReference type="NCBI Taxonomy" id="373384"/>
    <lineage>
        <taxon>Bacteria</taxon>
        <taxon>Pseudomonadati</taxon>
        <taxon>Pseudomonadota</taxon>
        <taxon>Gammaproteobacteria</taxon>
        <taxon>Enterobacterales</taxon>
        <taxon>Enterobacteriaceae</taxon>
        <taxon>Shigella</taxon>
    </lineage>
</organism>
<accession>Q0SZ35</accession>
<sequence length="387" mass="40846">MEQVVIVDAIRTPMGRSKGGAFRNVRAEDLSAHLMRSLLARNPALEAAALDDIYWGCVQQTLEQGFNIARNAALLAEVPHSVPAVTVNRLCGSSMQALHDAARMIMTGDAQACLVGGVEHIGHVPMSHGVDFHPGLSRNVAKAAGMMGLTAEMLARMHGISREMQDAFAARSHARAWAATQSAAFKNEIIPTGGHDADGVLKQFNYDEVIRPETTVEALATLRPAFDPVNGTVTAGTSSALSDGAAAMLVMSESRAHELGLKPRARVRSMAVVGCDPSIMGYGPVPASKLALKKAGLSASDIGVFEMNEAFAAQILPCIKDLGLMEQIDEKINLNGGAIALGHPLGCSGARISTTLLNLMERKDVQFGLATMCIGLGQGIATVFERV</sequence>
<protein>
    <recommendedName>
        <fullName evidence="1">3-ketoacyl-CoA thiolase</fullName>
        <ecNumber evidence="1">2.3.1.16</ecNumber>
    </recommendedName>
    <alternativeName>
        <fullName evidence="1">Acetyl-CoA acyltransferase</fullName>
    </alternativeName>
    <alternativeName>
        <fullName evidence="1">Beta-ketothiolase</fullName>
    </alternativeName>
    <alternativeName>
        <fullName evidence="1">Fatty acid oxidation complex subunit beta</fullName>
    </alternativeName>
</protein>